<gene>
    <name evidence="2" type="primary">NICOL1</name>
</gene>
<dbReference type="EMBL" id="BC126819">
    <property type="protein sequence ID" value="AAI26820.1"/>
    <property type="status" value="ALT_INIT"/>
    <property type="molecule type" value="mRNA"/>
</dbReference>
<dbReference type="RefSeq" id="XP_015319369.1">
    <property type="nucleotide sequence ID" value="XM_015463883.1"/>
</dbReference>
<dbReference type="FunCoup" id="A0JNN8">
    <property type="interactions" value="170"/>
</dbReference>
<dbReference type="STRING" id="9913.ENSBTAP00000041976"/>
<dbReference type="PaxDb" id="9913-ENSBTAP00000041976"/>
<dbReference type="Ensembl" id="ENSBTAT00000044483.5">
    <property type="protein sequence ID" value="ENSBTAP00000041976.3"/>
    <property type="gene ID" value="ENSBTAG00000031395.5"/>
</dbReference>
<dbReference type="KEGG" id="bta:615222"/>
<dbReference type="CTD" id="615222"/>
<dbReference type="VEuPathDB" id="HostDB:ENSBTAG00000031395"/>
<dbReference type="VGNC" id="VGNC:52725">
    <property type="gene designation" value="NICOL1"/>
</dbReference>
<dbReference type="eggNOG" id="ENOG502S5WR">
    <property type="taxonomic scope" value="Eukaryota"/>
</dbReference>
<dbReference type="GeneTree" id="ENSGT00390000013043"/>
<dbReference type="HOGENOM" id="CLU_153985_0_0_1"/>
<dbReference type="InParanoid" id="A0JNN8"/>
<dbReference type="OMA" id="CACWPSG"/>
<dbReference type="OrthoDB" id="9875352at2759"/>
<dbReference type="TreeFam" id="TF336171"/>
<dbReference type="Proteomes" id="UP000009136">
    <property type="component" value="Chromosome 6"/>
</dbReference>
<dbReference type="Bgee" id="ENSBTAG00000031395">
    <property type="expression patterns" value="Expressed in retina and 101 other cell types or tissues"/>
</dbReference>
<dbReference type="GO" id="GO:0005615">
    <property type="term" value="C:extracellular space"/>
    <property type="evidence" value="ECO:0000250"/>
    <property type="project" value="UniProtKB"/>
</dbReference>
<dbReference type="GO" id="GO:0048471">
    <property type="term" value="C:perinuclear region of cytoplasm"/>
    <property type="evidence" value="ECO:0000250"/>
    <property type="project" value="UniProtKB"/>
</dbReference>
<dbReference type="GO" id="GO:0003730">
    <property type="term" value="F:mRNA 3'-UTR binding"/>
    <property type="evidence" value="ECO:0000250"/>
    <property type="project" value="UniProtKB"/>
</dbReference>
<dbReference type="GO" id="GO:1990459">
    <property type="term" value="F:transferrin receptor binding"/>
    <property type="evidence" value="ECO:0007669"/>
    <property type="project" value="Ensembl"/>
</dbReference>
<dbReference type="GO" id="GO:0070935">
    <property type="term" value="P:3'-UTR-mediated mRNA stabilization"/>
    <property type="evidence" value="ECO:0000250"/>
    <property type="project" value="UniProtKB"/>
</dbReference>
<dbReference type="GO" id="GO:0007283">
    <property type="term" value="P:spermatogenesis"/>
    <property type="evidence" value="ECO:0000318"/>
    <property type="project" value="GO_Central"/>
</dbReference>
<dbReference type="InterPro" id="IPR028147">
    <property type="entry name" value="NICOL"/>
</dbReference>
<dbReference type="PANTHER" id="PTHR35451">
    <property type="entry name" value="NEUROPEPTIDE-LIKE PROTEIN C4ORF48"/>
    <property type="match status" value="1"/>
</dbReference>
<dbReference type="PANTHER" id="PTHR35451:SF1">
    <property type="entry name" value="NEUROPEPTIDE-LIKE PROTEIN C4ORF48"/>
    <property type="match status" value="1"/>
</dbReference>
<dbReference type="Pfam" id="PF15161">
    <property type="entry name" value="Neuropep_like"/>
    <property type="match status" value="1"/>
</dbReference>
<feature type="signal peptide" evidence="3">
    <location>
        <begin position="1"/>
        <end position="35"/>
    </location>
</feature>
<feature type="chain" id="PRO_0000406953" description="NELL2-interacting cell ontogeny regulator 1">
    <location>
        <begin position="36"/>
        <end position="97"/>
    </location>
</feature>
<sequence>MAPLPPCGPPRSPPPRLLLLLLLLSATLLGAPARAEPAAGSAVPAQSRPCVDCHAFEFMQRALQDLRKTAYSLDARTESLLLQAERRALCACWPAGH</sequence>
<protein>
    <recommendedName>
        <fullName evidence="2">NELL2-interacting cell ontogeny regulator 1</fullName>
    </recommendedName>
    <alternativeName>
        <fullName evidence="1">NELL2-interacting cofactor for lumicrine signaling</fullName>
        <shortName evidence="1">NICOL</shortName>
    </alternativeName>
</protein>
<name>NICOL_BOVIN</name>
<reference key="1">
    <citation type="submission" date="2006-10" db="EMBL/GenBank/DDBJ databases">
        <authorList>
            <consortium name="NIH - Mammalian Gene Collection (MGC) project"/>
        </authorList>
    </citation>
    <scope>NUCLEOTIDE SEQUENCE [LARGE SCALE MRNA]</scope>
    <source>
        <strain>Hereford</strain>
        <tissue>Fetal cerebellum</tissue>
    </source>
</reference>
<accession>A0JNN8</accession>
<organism>
    <name type="scientific">Bos taurus</name>
    <name type="common">Bovine</name>
    <dbReference type="NCBI Taxonomy" id="9913"/>
    <lineage>
        <taxon>Eukaryota</taxon>
        <taxon>Metazoa</taxon>
        <taxon>Chordata</taxon>
        <taxon>Craniata</taxon>
        <taxon>Vertebrata</taxon>
        <taxon>Euteleostomi</taxon>
        <taxon>Mammalia</taxon>
        <taxon>Eutheria</taxon>
        <taxon>Laurasiatheria</taxon>
        <taxon>Artiodactyla</taxon>
        <taxon>Ruminantia</taxon>
        <taxon>Pecora</taxon>
        <taxon>Bovidae</taxon>
        <taxon>Bovinae</taxon>
        <taxon>Bos</taxon>
    </lineage>
</organism>
<comment type="function">
    <text evidence="1">mRNA-binding protein which interacts with a range of target mRNAs including SERPINE1, ACTA2, CCN2 and COL4A1 and may promote extracellular matrix production. Binds to the 3'-UTR of SERPINE1 mRNA and stabilizes the mRNA, possibly by competing for binding with SERBP1 and preventing SERBP1-mediated mRNA degradation. Also binds to the 3'-UTR of ACTA2. Testis-derived lumicrine factor that triggers epididymal differentiation and sperm maturation.</text>
</comment>
<comment type="subunit">
    <text evidence="1">Interacts with NELL2; triggers epididymal differentiation. Interacts with cell surface receptor TFRC; the interaction mediates uptake of NICOL1 into fibroblasts.</text>
</comment>
<comment type="subcellular location">
    <subcellularLocation>
        <location evidence="1">Secreted</location>
    </subcellularLocation>
    <subcellularLocation>
        <location evidence="1">Cytoplasm</location>
        <location evidence="1">Perinuclear region</location>
    </subcellularLocation>
    <text evidence="1">Detected in the perinuclear region of fibroblasts.</text>
</comment>
<comment type="similarity">
    <text evidence="4">Belongs to the NICOL family.</text>
</comment>
<comment type="sequence caution" evidence="4">
    <conflict type="erroneous initiation">
        <sequence resource="EMBL-CDS" id="AAI26820"/>
    </conflict>
    <text>Extended N-terminus.</text>
</comment>
<evidence type="ECO:0000250" key="1">
    <source>
        <dbReference type="UniProtKB" id="Q3UR78"/>
    </source>
</evidence>
<evidence type="ECO:0000250" key="2">
    <source>
        <dbReference type="UniProtKB" id="Q5BLP8"/>
    </source>
</evidence>
<evidence type="ECO:0000255" key="3"/>
<evidence type="ECO:0000305" key="4"/>
<keyword id="KW-0963">Cytoplasm</keyword>
<keyword id="KW-1185">Reference proteome</keyword>
<keyword id="KW-0694">RNA-binding</keyword>
<keyword id="KW-0964">Secreted</keyword>
<keyword id="KW-0732">Signal</keyword>
<proteinExistence type="inferred from homology"/>